<organism>
    <name type="scientific">Solanum tuberosum</name>
    <name type="common">Potato</name>
    <dbReference type="NCBI Taxonomy" id="4113"/>
    <lineage>
        <taxon>Eukaryota</taxon>
        <taxon>Viridiplantae</taxon>
        <taxon>Streptophyta</taxon>
        <taxon>Embryophyta</taxon>
        <taxon>Tracheophyta</taxon>
        <taxon>Spermatophyta</taxon>
        <taxon>Magnoliopsida</taxon>
        <taxon>eudicotyledons</taxon>
        <taxon>Gunneridae</taxon>
        <taxon>Pentapetalae</taxon>
        <taxon>asterids</taxon>
        <taxon>lamiids</taxon>
        <taxon>Solanales</taxon>
        <taxon>Solanaceae</taxon>
        <taxon>Solanoideae</taxon>
        <taxon>Solaneae</taxon>
        <taxon>Solanum</taxon>
    </lineage>
</organism>
<protein>
    <recommendedName>
        <fullName>Actin-82</fullName>
        <ecNumber evidence="1">3.6.4.-</ecNumber>
    </recommendedName>
</protein>
<keyword id="KW-0067">ATP-binding</keyword>
<keyword id="KW-0963">Cytoplasm</keyword>
<keyword id="KW-0206">Cytoskeleton</keyword>
<keyword id="KW-0378">Hydrolase</keyword>
<keyword id="KW-0547">Nucleotide-binding</keyword>
<keyword id="KW-1185">Reference proteome</keyword>
<accession>P93584</accession>
<feature type="chain" id="PRO_0000089016" description="Actin-82">
    <location>
        <begin position="1" status="less than"/>
        <end position="336" status="greater than"/>
    </location>
</feature>
<feature type="non-terminal residue">
    <location>
        <position position="1"/>
    </location>
</feature>
<feature type="non-terminal residue">
    <location>
        <position position="336"/>
    </location>
</feature>
<reference key="1">
    <citation type="journal article" date="1996" name="Mol. Biol. Evol.">
        <title>Phylogeny and substitution rates of angiosperm actin genes.</title>
        <authorList>
            <person name="Moniz de Sa M."/>
            <person name="Drouin G."/>
        </authorList>
    </citation>
    <scope>NUCLEOTIDE SEQUENCE [GENOMIC DNA]</scope>
</reference>
<comment type="function">
    <text>Actins are highly conserved proteins that are involved in various types of cell motility and are ubiquitously expressed in all eukaryotic cells. Essential component of cell cytoskeleton; plays an important role in cytoplasmic streaming, cell shape determination, cell division, organelle movement and extension growth.</text>
</comment>
<comment type="catalytic activity">
    <reaction evidence="1">
        <text>ATP + H2O = ADP + phosphate + H(+)</text>
        <dbReference type="Rhea" id="RHEA:13065"/>
        <dbReference type="ChEBI" id="CHEBI:15377"/>
        <dbReference type="ChEBI" id="CHEBI:15378"/>
        <dbReference type="ChEBI" id="CHEBI:30616"/>
        <dbReference type="ChEBI" id="CHEBI:43474"/>
        <dbReference type="ChEBI" id="CHEBI:456216"/>
    </reaction>
</comment>
<comment type="subcellular location">
    <subcellularLocation>
        <location>Cytoplasm</location>
        <location>Cytoskeleton</location>
    </subcellularLocation>
</comment>
<comment type="miscellaneous">
    <text>There are at least 13 actin genes in potato.</text>
</comment>
<comment type="similarity">
    <text evidence="2">Belongs to the actin family.</text>
</comment>
<evidence type="ECO:0000250" key="1">
    <source>
        <dbReference type="UniProtKB" id="P68137"/>
    </source>
</evidence>
<evidence type="ECO:0000305" key="2"/>
<proteinExistence type="inferred from homology"/>
<sequence length="336" mass="37233">AGFAGDDAPRAVFPSIVGRPRHTGVMVGMGQKDAYVGDEAQSKRGILTLKYPIEHGIVSNWDDMEKIWHHTFYNELRVAPEEHPVLLTEAPLNPKANREKMTQIMFETFNTPAMYVAIQAVLSLYASGRTTGIVMDSGDGVSHTVPIYEGYALPHAILRLDLAGRDLTDHLMKILTERGYSFTTTAEREIVRDVKEKLSYIALDYEQELDTSKTSSSVEKSYELPDGQVITIGAERFRCPEVLFQPSMIGMEAAGIHETTYNSIMKCDVDIRKDLYGNIVLSGGTTMFNGIADRMSKEITALAPSSMKIKVVAPPERKYSVWIGGSILASLSTFQQ</sequence>
<dbReference type="EC" id="3.6.4.-" evidence="1"/>
<dbReference type="EMBL" id="U60483">
    <property type="protein sequence ID" value="AAB40096.1"/>
    <property type="molecule type" value="Genomic_DNA"/>
</dbReference>
<dbReference type="SMR" id="P93584"/>
<dbReference type="STRING" id="4113.P93584"/>
<dbReference type="InParanoid" id="P93584"/>
<dbReference type="Proteomes" id="UP000011115">
    <property type="component" value="Unassembled WGS sequence"/>
</dbReference>
<dbReference type="ExpressionAtlas" id="P93584">
    <property type="expression patterns" value="baseline"/>
</dbReference>
<dbReference type="GO" id="GO:0015629">
    <property type="term" value="C:actin cytoskeleton"/>
    <property type="evidence" value="ECO:0000318"/>
    <property type="project" value="GO_Central"/>
</dbReference>
<dbReference type="GO" id="GO:0005737">
    <property type="term" value="C:cytoplasm"/>
    <property type="evidence" value="ECO:0007669"/>
    <property type="project" value="UniProtKB-KW"/>
</dbReference>
<dbReference type="GO" id="GO:0005524">
    <property type="term" value="F:ATP binding"/>
    <property type="evidence" value="ECO:0007669"/>
    <property type="project" value="UniProtKB-KW"/>
</dbReference>
<dbReference type="GO" id="GO:0016787">
    <property type="term" value="F:hydrolase activity"/>
    <property type="evidence" value="ECO:0007669"/>
    <property type="project" value="UniProtKB-KW"/>
</dbReference>
<dbReference type="CDD" id="cd10224">
    <property type="entry name" value="ASKHA_NBD_actin"/>
    <property type="match status" value="1"/>
</dbReference>
<dbReference type="FunFam" id="3.30.420.40:FF:000291">
    <property type="entry name" value="Actin, alpha skeletal muscle"/>
    <property type="match status" value="1"/>
</dbReference>
<dbReference type="FunFam" id="3.90.640.10:FF:000001">
    <property type="entry name" value="Actin, muscle"/>
    <property type="match status" value="1"/>
</dbReference>
<dbReference type="FunFam" id="3.30.420.40:FF:000404">
    <property type="entry name" value="Major actin"/>
    <property type="match status" value="1"/>
</dbReference>
<dbReference type="Gene3D" id="3.30.420.40">
    <property type="match status" value="2"/>
</dbReference>
<dbReference type="Gene3D" id="3.90.640.10">
    <property type="entry name" value="Actin, Chain A, domain 4"/>
    <property type="match status" value="1"/>
</dbReference>
<dbReference type="InterPro" id="IPR004000">
    <property type="entry name" value="Actin"/>
</dbReference>
<dbReference type="InterPro" id="IPR020902">
    <property type="entry name" value="Actin/actin-like_CS"/>
</dbReference>
<dbReference type="InterPro" id="IPR004001">
    <property type="entry name" value="Actin_CS"/>
</dbReference>
<dbReference type="InterPro" id="IPR043129">
    <property type="entry name" value="ATPase_NBD"/>
</dbReference>
<dbReference type="PANTHER" id="PTHR11937">
    <property type="entry name" value="ACTIN"/>
    <property type="match status" value="1"/>
</dbReference>
<dbReference type="Pfam" id="PF00022">
    <property type="entry name" value="Actin"/>
    <property type="match status" value="1"/>
</dbReference>
<dbReference type="PRINTS" id="PR00190">
    <property type="entry name" value="ACTIN"/>
</dbReference>
<dbReference type="SMART" id="SM00268">
    <property type="entry name" value="ACTIN"/>
    <property type="match status" value="1"/>
</dbReference>
<dbReference type="SUPFAM" id="SSF53067">
    <property type="entry name" value="Actin-like ATPase domain"/>
    <property type="match status" value="2"/>
</dbReference>
<dbReference type="PROSITE" id="PS00406">
    <property type="entry name" value="ACTINS_1"/>
    <property type="match status" value="1"/>
</dbReference>
<dbReference type="PROSITE" id="PS01132">
    <property type="entry name" value="ACTINS_ACT_LIKE"/>
    <property type="match status" value="1"/>
</dbReference>
<name>ACT9_SOLTU</name>